<feature type="chain" id="PRO_0000409458" description="Microtubule-associated protein 70-2">
    <location>
        <begin position="1"/>
        <end position="634"/>
    </location>
</feature>
<feature type="region of interest" description="Disordered" evidence="3">
    <location>
        <begin position="1"/>
        <end position="57"/>
    </location>
</feature>
<feature type="region of interest" description="Required for targeting to microtubules" evidence="1">
    <location>
        <begin position="258"/>
        <end position="494"/>
    </location>
</feature>
<feature type="region of interest" description="Disordered" evidence="3">
    <location>
        <begin position="393"/>
        <end position="526"/>
    </location>
</feature>
<feature type="region of interest" description="Disordered" evidence="3">
    <location>
        <begin position="594"/>
        <end position="634"/>
    </location>
</feature>
<feature type="coiled-coil region" evidence="2">
    <location>
        <begin position="74"/>
        <end position="392"/>
    </location>
</feature>
<feature type="coiled-coil region" evidence="2">
    <location>
        <begin position="532"/>
        <end position="601"/>
    </location>
</feature>
<feature type="compositionally biased region" description="Polar residues" evidence="3">
    <location>
        <begin position="25"/>
        <end position="35"/>
    </location>
</feature>
<feature type="compositionally biased region" description="Low complexity" evidence="3">
    <location>
        <begin position="36"/>
        <end position="47"/>
    </location>
</feature>
<feature type="compositionally biased region" description="Polar residues" evidence="3">
    <location>
        <begin position="393"/>
        <end position="417"/>
    </location>
</feature>
<feature type="compositionally biased region" description="Polar residues" evidence="3">
    <location>
        <begin position="443"/>
        <end position="464"/>
    </location>
</feature>
<feature type="compositionally biased region" description="Polar residues" evidence="3">
    <location>
        <begin position="605"/>
        <end position="616"/>
    </location>
</feature>
<proteinExistence type="evidence at protein level"/>
<dbReference type="EMBL" id="AM086439">
    <property type="protein sequence ID" value="CAJ31079.1"/>
    <property type="status" value="ALT_FRAME"/>
    <property type="molecule type" value="mRNA"/>
</dbReference>
<dbReference type="EMBL" id="AC004133">
    <property type="protein sequence ID" value="AAG03117.1"/>
    <property type="status" value="ALT_SEQ"/>
    <property type="molecule type" value="Genomic_DNA"/>
</dbReference>
<dbReference type="EMBL" id="CP002684">
    <property type="protein sequence ID" value="AEE30561.1"/>
    <property type="molecule type" value="Genomic_DNA"/>
</dbReference>
<dbReference type="EMBL" id="AY128287">
    <property type="protein sequence ID" value="AAM91095.1"/>
    <property type="molecule type" value="mRNA"/>
</dbReference>
<dbReference type="EMBL" id="BT000826">
    <property type="protein sequence ID" value="AAN33201.1"/>
    <property type="molecule type" value="mRNA"/>
</dbReference>
<dbReference type="RefSeq" id="NP_173873.5">
    <property type="nucleotide sequence ID" value="NM_102311.7"/>
</dbReference>
<dbReference type="SMR" id="Q8L7S4"/>
<dbReference type="BioGRID" id="24320">
    <property type="interactions" value="7"/>
</dbReference>
<dbReference type="FunCoup" id="Q8L7S4">
    <property type="interactions" value="1210"/>
</dbReference>
<dbReference type="IntAct" id="Q8L7S4">
    <property type="interactions" value="7"/>
</dbReference>
<dbReference type="STRING" id="3702.Q8L7S4"/>
<dbReference type="iPTMnet" id="Q8L7S4"/>
<dbReference type="PaxDb" id="3702-AT1G24764.1"/>
<dbReference type="ProteomicsDB" id="250942"/>
<dbReference type="EnsemblPlants" id="AT1G24764.1">
    <property type="protein sequence ID" value="AT1G24764.1"/>
    <property type="gene ID" value="AT1G24764"/>
</dbReference>
<dbReference type="GeneID" id="839083"/>
<dbReference type="Gramene" id="AT1G24764.1">
    <property type="protein sequence ID" value="AT1G24764.1"/>
    <property type="gene ID" value="AT1G24764"/>
</dbReference>
<dbReference type="KEGG" id="ath:AT1G24764"/>
<dbReference type="Araport" id="AT1G24764"/>
<dbReference type="TAIR" id="AT1G24764">
    <property type="gene designation" value="MAP70-2"/>
</dbReference>
<dbReference type="eggNOG" id="ENOG502QTPA">
    <property type="taxonomic scope" value="Eukaryota"/>
</dbReference>
<dbReference type="HOGENOM" id="CLU_023069_0_0_1"/>
<dbReference type="InParanoid" id="Q8L7S4"/>
<dbReference type="PhylomeDB" id="Q8L7S4"/>
<dbReference type="PRO" id="PR:Q8L7S4"/>
<dbReference type="Proteomes" id="UP000006548">
    <property type="component" value="Chromosome 1"/>
</dbReference>
<dbReference type="ExpressionAtlas" id="Q8L7S4">
    <property type="expression patterns" value="baseline and differential"/>
</dbReference>
<dbReference type="GO" id="GO:0005737">
    <property type="term" value="C:cytoplasm"/>
    <property type="evidence" value="ECO:0007669"/>
    <property type="project" value="UniProtKB-KW"/>
</dbReference>
<dbReference type="GO" id="GO:0005874">
    <property type="term" value="C:microtubule"/>
    <property type="evidence" value="ECO:0000250"/>
    <property type="project" value="TAIR"/>
</dbReference>
<dbReference type="GO" id="GO:0008017">
    <property type="term" value="F:microtubule binding"/>
    <property type="evidence" value="ECO:0000250"/>
    <property type="project" value="TAIR"/>
</dbReference>
<dbReference type="GO" id="GO:0007010">
    <property type="term" value="P:cytoskeleton organization"/>
    <property type="evidence" value="ECO:0000304"/>
    <property type="project" value="TAIR"/>
</dbReference>
<dbReference type="InterPro" id="IPR009768">
    <property type="entry name" value="MAP70"/>
</dbReference>
<dbReference type="PANTHER" id="PTHR31246">
    <property type="entry name" value="MICROTUBULE-ASSOCIATED PROTEIN 70-2"/>
    <property type="match status" value="1"/>
</dbReference>
<dbReference type="PANTHER" id="PTHR31246:SF17">
    <property type="entry name" value="MICROTUBULE-ASSOCIATED PROTEIN 70-2"/>
    <property type="match status" value="1"/>
</dbReference>
<dbReference type="Pfam" id="PF07058">
    <property type="entry name" value="MAP70"/>
    <property type="match status" value="1"/>
</dbReference>
<gene>
    <name type="primary">MAP70.2</name>
    <name type="ordered locus">At1g24764</name>
    <name type="ORF">F5A9.19</name>
</gene>
<sequence length="634" mass="70207">MSDVSGDGDLSATVTEHEVTPQPPVSSATYPSLTVSASYKESSGGKSSSKRRPIRPSFDAAADNEFITLLHGSDPVKVELNRLENEVRDKDRELGEANAEIKALRLSERQREKAVEELTEELTKLDEKLKLTESILESKNLEIKKINEEKKASMAAQFAAEATLRRVHAAQKDDDMPPIEAILAPLEAELKLARSEIGKLQEDNRALDRLTKSKEAALLEAERTVEAAMAKAAMVDDLQNKNQELMKQIEICQEENKILDRMHRQKVAEVEKLTQTVRELEEAVLAGGAAANAVRDYQRKFQEMNEERKTLDRELARAKVTANRVATVVANEWKDGNDKVMPVKQWLEERRFLQGEMQQLRDKLAITDRAAKSEAQLKEKFQLRLKVLEETLRGTSSSATRNTPEARSMSNGPSRRQSLGGAENLQKFTSNGALSKKAPASQMRHSLSINSTSVLKNAKGTSKSFDGGTRSVDRGKALLNGPGNYSFNKATDDSKEAESGNGWKENSEEKPQSEDPEAATEDSVPGVLYDLLQKEVVSLRKASNEKDQSLKDKDDAIEMLAKKVETLTKAMEVEAKKMRREVAAMEKEVAAMRVEKDQDARAKRFSNSKSPSNTAQILAGRAAGRSGGLTKSTQ</sequence>
<reference key="1">
    <citation type="journal article" date="2005" name="Plant J.">
        <title>Identification of a novel family of 70 kDa microtubule-associated proteins in Arabidopsis cells.</title>
        <authorList>
            <person name="Korolev A.V."/>
            <person name="Chan J."/>
            <person name="Naldrett M.J."/>
            <person name="Doonan J.H."/>
            <person name="Lloyd C.W."/>
        </authorList>
    </citation>
    <scope>NUCLEOTIDE SEQUENCE [MRNA]</scope>
    <scope>IDENTIFICATION BY MASS SPECTROMETRY</scope>
</reference>
<reference key="2">
    <citation type="journal article" date="2000" name="Nature">
        <title>Sequence and analysis of chromosome 1 of the plant Arabidopsis thaliana.</title>
        <authorList>
            <person name="Theologis A."/>
            <person name="Ecker J.R."/>
            <person name="Palm C.J."/>
            <person name="Federspiel N.A."/>
            <person name="Kaul S."/>
            <person name="White O."/>
            <person name="Alonso J."/>
            <person name="Altafi H."/>
            <person name="Araujo R."/>
            <person name="Bowman C.L."/>
            <person name="Brooks S.Y."/>
            <person name="Buehler E."/>
            <person name="Chan A."/>
            <person name="Chao Q."/>
            <person name="Chen H."/>
            <person name="Cheuk R.F."/>
            <person name="Chin C.W."/>
            <person name="Chung M.K."/>
            <person name="Conn L."/>
            <person name="Conway A.B."/>
            <person name="Conway A.R."/>
            <person name="Creasy T.H."/>
            <person name="Dewar K."/>
            <person name="Dunn P."/>
            <person name="Etgu P."/>
            <person name="Feldblyum T.V."/>
            <person name="Feng J.-D."/>
            <person name="Fong B."/>
            <person name="Fujii C.Y."/>
            <person name="Gill J.E."/>
            <person name="Goldsmith A.D."/>
            <person name="Haas B."/>
            <person name="Hansen N.F."/>
            <person name="Hughes B."/>
            <person name="Huizar L."/>
            <person name="Hunter J.L."/>
            <person name="Jenkins J."/>
            <person name="Johnson-Hopson C."/>
            <person name="Khan S."/>
            <person name="Khaykin E."/>
            <person name="Kim C.J."/>
            <person name="Koo H.L."/>
            <person name="Kremenetskaia I."/>
            <person name="Kurtz D.B."/>
            <person name="Kwan A."/>
            <person name="Lam B."/>
            <person name="Langin-Hooper S."/>
            <person name="Lee A."/>
            <person name="Lee J.M."/>
            <person name="Lenz C.A."/>
            <person name="Li J.H."/>
            <person name="Li Y.-P."/>
            <person name="Lin X."/>
            <person name="Liu S.X."/>
            <person name="Liu Z.A."/>
            <person name="Luros J.S."/>
            <person name="Maiti R."/>
            <person name="Marziali A."/>
            <person name="Militscher J."/>
            <person name="Miranda M."/>
            <person name="Nguyen M."/>
            <person name="Nierman W.C."/>
            <person name="Osborne B.I."/>
            <person name="Pai G."/>
            <person name="Peterson J."/>
            <person name="Pham P.K."/>
            <person name="Rizzo M."/>
            <person name="Rooney T."/>
            <person name="Rowley D."/>
            <person name="Sakano H."/>
            <person name="Salzberg S.L."/>
            <person name="Schwartz J.R."/>
            <person name="Shinn P."/>
            <person name="Southwick A.M."/>
            <person name="Sun H."/>
            <person name="Tallon L.J."/>
            <person name="Tambunga G."/>
            <person name="Toriumi M.J."/>
            <person name="Town C.D."/>
            <person name="Utterback T."/>
            <person name="Van Aken S."/>
            <person name="Vaysberg M."/>
            <person name="Vysotskaia V.S."/>
            <person name="Walker M."/>
            <person name="Wu D."/>
            <person name="Yu G."/>
            <person name="Fraser C.M."/>
            <person name="Venter J.C."/>
            <person name="Davis R.W."/>
        </authorList>
    </citation>
    <scope>NUCLEOTIDE SEQUENCE [LARGE SCALE GENOMIC DNA]</scope>
    <source>
        <strain>cv. Columbia</strain>
    </source>
</reference>
<reference key="3">
    <citation type="journal article" date="2017" name="Plant J.">
        <title>Araport11: a complete reannotation of the Arabidopsis thaliana reference genome.</title>
        <authorList>
            <person name="Cheng C.Y."/>
            <person name="Krishnakumar V."/>
            <person name="Chan A.P."/>
            <person name="Thibaud-Nissen F."/>
            <person name="Schobel S."/>
            <person name="Town C.D."/>
        </authorList>
    </citation>
    <scope>GENOME REANNOTATION</scope>
    <source>
        <strain>cv. Columbia</strain>
    </source>
</reference>
<reference key="4">
    <citation type="journal article" date="2003" name="Science">
        <title>Empirical analysis of transcriptional activity in the Arabidopsis genome.</title>
        <authorList>
            <person name="Yamada K."/>
            <person name="Lim J."/>
            <person name="Dale J.M."/>
            <person name="Chen H."/>
            <person name="Shinn P."/>
            <person name="Palm C.J."/>
            <person name="Southwick A.M."/>
            <person name="Wu H.C."/>
            <person name="Kim C.J."/>
            <person name="Nguyen M."/>
            <person name="Pham P.K."/>
            <person name="Cheuk R.F."/>
            <person name="Karlin-Newmann G."/>
            <person name="Liu S.X."/>
            <person name="Lam B."/>
            <person name="Sakano H."/>
            <person name="Wu T."/>
            <person name="Yu G."/>
            <person name="Miranda M."/>
            <person name="Quach H.L."/>
            <person name="Tripp M."/>
            <person name="Chang C.H."/>
            <person name="Lee J.M."/>
            <person name="Toriumi M.J."/>
            <person name="Chan M.M."/>
            <person name="Tang C.C."/>
            <person name="Onodera C.S."/>
            <person name="Deng J.M."/>
            <person name="Akiyama K."/>
            <person name="Ansari Y."/>
            <person name="Arakawa T."/>
            <person name="Banh J."/>
            <person name="Banno F."/>
            <person name="Bowser L."/>
            <person name="Brooks S.Y."/>
            <person name="Carninci P."/>
            <person name="Chao Q."/>
            <person name="Choy N."/>
            <person name="Enju A."/>
            <person name="Goldsmith A.D."/>
            <person name="Gurjal M."/>
            <person name="Hansen N.F."/>
            <person name="Hayashizaki Y."/>
            <person name="Johnson-Hopson C."/>
            <person name="Hsuan V.W."/>
            <person name="Iida K."/>
            <person name="Karnes M."/>
            <person name="Khan S."/>
            <person name="Koesema E."/>
            <person name="Ishida J."/>
            <person name="Jiang P.X."/>
            <person name="Jones T."/>
            <person name="Kawai J."/>
            <person name="Kamiya A."/>
            <person name="Meyers C."/>
            <person name="Nakajima M."/>
            <person name="Narusaka M."/>
            <person name="Seki M."/>
            <person name="Sakurai T."/>
            <person name="Satou M."/>
            <person name="Tamse R."/>
            <person name="Vaysberg M."/>
            <person name="Wallender E.K."/>
            <person name="Wong C."/>
            <person name="Yamamura Y."/>
            <person name="Yuan S."/>
            <person name="Shinozaki K."/>
            <person name="Davis R.W."/>
            <person name="Theologis A."/>
            <person name="Ecker J.R."/>
        </authorList>
    </citation>
    <scope>NUCLEOTIDE SEQUENCE [LARGE SCALE MRNA]</scope>
    <source>
        <strain>cv. Columbia</strain>
    </source>
</reference>
<reference key="5">
    <citation type="journal article" date="2009" name="Plant Physiol.">
        <title>Large-scale Arabidopsis phosphoproteome profiling reveals novel chloroplast kinase substrates and phosphorylation networks.</title>
        <authorList>
            <person name="Reiland S."/>
            <person name="Messerli G."/>
            <person name="Baerenfaller K."/>
            <person name="Gerrits B."/>
            <person name="Endler A."/>
            <person name="Grossmann J."/>
            <person name="Gruissem W."/>
            <person name="Baginsky S."/>
        </authorList>
    </citation>
    <scope>IDENTIFICATION BY MASS SPECTROMETRY [LARGE SCALE ANALYSIS]</scope>
</reference>
<comment type="function">
    <text evidence="1">Plant-specific protein that interact with microtubules.</text>
</comment>
<comment type="subcellular location">
    <subcellularLocation>
        <location evidence="1">Cytoplasm</location>
        <location evidence="1">Cytoskeleton</location>
    </subcellularLocation>
    <text>Associated to microtubules.</text>
</comment>
<comment type="similarity">
    <text evidence="4">Belongs to the MAP70 family.</text>
</comment>
<comment type="sequence caution" evidence="4">
    <conflict type="erroneous gene model prediction">
        <sequence resource="EMBL-CDS" id="AAG03117"/>
    </conflict>
</comment>
<comment type="sequence caution" evidence="4">
    <conflict type="frameshift">
        <sequence resource="EMBL-CDS" id="CAJ31079"/>
    </conflict>
</comment>
<accession>Q8L7S4</accession>
<accession>Q3MQ34</accession>
<accession>Q9FXK0</accession>
<protein>
    <recommendedName>
        <fullName>Microtubule-associated protein 70-2</fullName>
        <shortName>AtMAP70-2</shortName>
    </recommendedName>
    <alternativeName>
        <fullName>70 kDa microtubule-associated protein 2</fullName>
    </alternativeName>
</protein>
<evidence type="ECO:0000250" key="1"/>
<evidence type="ECO:0000255" key="2"/>
<evidence type="ECO:0000256" key="3">
    <source>
        <dbReference type="SAM" id="MobiDB-lite"/>
    </source>
</evidence>
<evidence type="ECO:0000305" key="4"/>
<name>MP702_ARATH</name>
<keyword id="KW-0175">Coiled coil</keyword>
<keyword id="KW-0963">Cytoplasm</keyword>
<keyword id="KW-0206">Cytoskeleton</keyword>
<keyword id="KW-0493">Microtubule</keyword>
<keyword id="KW-1185">Reference proteome</keyword>
<organism>
    <name type="scientific">Arabidopsis thaliana</name>
    <name type="common">Mouse-ear cress</name>
    <dbReference type="NCBI Taxonomy" id="3702"/>
    <lineage>
        <taxon>Eukaryota</taxon>
        <taxon>Viridiplantae</taxon>
        <taxon>Streptophyta</taxon>
        <taxon>Embryophyta</taxon>
        <taxon>Tracheophyta</taxon>
        <taxon>Spermatophyta</taxon>
        <taxon>Magnoliopsida</taxon>
        <taxon>eudicotyledons</taxon>
        <taxon>Gunneridae</taxon>
        <taxon>Pentapetalae</taxon>
        <taxon>rosids</taxon>
        <taxon>malvids</taxon>
        <taxon>Brassicales</taxon>
        <taxon>Brassicaceae</taxon>
        <taxon>Camelineae</taxon>
        <taxon>Arabidopsis</taxon>
    </lineage>
</organism>